<name>GLK_SHISS</name>
<keyword id="KW-0067">ATP-binding</keyword>
<keyword id="KW-0963">Cytoplasm</keyword>
<keyword id="KW-0324">Glycolysis</keyword>
<keyword id="KW-0418">Kinase</keyword>
<keyword id="KW-0547">Nucleotide-binding</keyword>
<keyword id="KW-1185">Reference proteome</keyword>
<keyword id="KW-0808">Transferase</keyword>
<evidence type="ECO:0000255" key="1">
    <source>
        <dbReference type="HAMAP-Rule" id="MF_00524"/>
    </source>
</evidence>
<accession>Q3YZE4</accession>
<dbReference type="EC" id="2.7.1.2" evidence="1"/>
<dbReference type="EMBL" id="CP000038">
    <property type="protein sequence ID" value="AAZ89118.1"/>
    <property type="molecule type" value="Genomic_DNA"/>
</dbReference>
<dbReference type="RefSeq" id="WP_000170351.1">
    <property type="nucleotide sequence ID" value="NC_007384.1"/>
</dbReference>
<dbReference type="SMR" id="Q3YZE4"/>
<dbReference type="GeneID" id="93774740"/>
<dbReference type="KEGG" id="ssn:SSON_2480"/>
<dbReference type="HOGENOM" id="CLU_042582_1_0_6"/>
<dbReference type="Proteomes" id="UP000002529">
    <property type="component" value="Chromosome"/>
</dbReference>
<dbReference type="GO" id="GO:0005829">
    <property type="term" value="C:cytosol"/>
    <property type="evidence" value="ECO:0007669"/>
    <property type="project" value="TreeGrafter"/>
</dbReference>
<dbReference type="GO" id="GO:0005524">
    <property type="term" value="F:ATP binding"/>
    <property type="evidence" value="ECO:0007669"/>
    <property type="project" value="UniProtKB-UniRule"/>
</dbReference>
<dbReference type="GO" id="GO:0005536">
    <property type="term" value="F:D-glucose binding"/>
    <property type="evidence" value="ECO:0007669"/>
    <property type="project" value="InterPro"/>
</dbReference>
<dbReference type="GO" id="GO:0004340">
    <property type="term" value="F:glucokinase activity"/>
    <property type="evidence" value="ECO:0007669"/>
    <property type="project" value="UniProtKB-UniRule"/>
</dbReference>
<dbReference type="GO" id="GO:0006096">
    <property type="term" value="P:glycolytic process"/>
    <property type="evidence" value="ECO:0007669"/>
    <property type="project" value="UniProtKB-UniRule"/>
</dbReference>
<dbReference type="CDD" id="cd24008">
    <property type="entry name" value="ASKHA_NBD_GLK"/>
    <property type="match status" value="1"/>
</dbReference>
<dbReference type="FunFam" id="3.30.420.40:FF:000045">
    <property type="entry name" value="Glucokinase"/>
    <property type="match status" value="1"/>
</dbReference>
<dbReference type="FunFam" id="3.40.367.20:FF:000002">
    <property type="entry name" value="Glucokinase"/>
    <property type="match status" value="1"/>
</dbReference>
<dbReference type="Gene3D" id="3.30.420.40">
    <property type="match status" value="1"/>
</dbReference>
<dbReference type="Gene3D" id="3.40.367.20">
    <property type="match status" value="1"/>
</dbReference>
<dbReference type="HAMAP" id="MF_00524">
    <property type="entry name" value="Glucokinase"/>
    <property type="match status" value="1"/>
</dbReference>
<dbReference type="InterPro" id="IPR043129">
    <property type="entry name" value="ATPase_NBD"/>
</dbReference>
<dbReference type="InterPro" id="IPR050201">
    <property type="entry name" value="Bacterial_glucokinase"/>
</dbReference>
<dbReference type="InterPro" id="IPR003836">
    <property type="entry name" value="Glucokinase"/>
</dbReference>
<dbReference type="NCBIfam" id="TIGR00749">
    <property type="entry name" value="glk"/>
    <property type="match status" value="1"/>
</dbReference>
<dbReference type="NCBIfam" id="NF001414">
    <property type="entry name" value="PRK00292.1-1"/>
    <property type="match status" value="1"/>
</dbReference>
<dbReference type="NCBIfam" id="NF001416">
    <property type="entry name" value="PRK00292.1-3"/>
    <property type="match status" value="1"/>
</dbReference>
<dbReference type="NCBIfam" id="NF009073">
    <property type="entry name" value="PRK12408.1"/>
    <property type="match status" value="1"/>
</dbReference>
<dbReference type="PANTHER" id="PTHR47690">
    <property type="entry name" value="GLUCOKINASE"/>
    <property type="match status" value="1"/>
</dbReference>
<dbReference type="PANTHER" id="PTHR47690:SF1">
    <property type="entry name" value="GLUCOKINASE"/>
    <property type="match status" value="1"/>
</dbReference>
<dbReference type="Pfam" id="PF02685">
    <property type="entry name" value="Glucokinase"/>
    <property type="match status" value="1"/>
</dbReference>
<dbReference type="SUPFAM" id="SSF53067">
    <property type="entry name" value="Actin-like ATPase domain"/>
    <property type="match status" value="1"/>
</dbReference>
<comment type="catalytic activity">
    <reaction evidence="1">
        <text>D-glucose + ATP = D-glucose 6-phosphate + ADP + H(+)</text>
        <dbReference type="Rhea" id="RHEA:17825"/>
        <dbReference type="ChEBI" id="CHEBI:4167"/>
        <dbReference type="ChEBI" id="CHEBI:15378"/>
        <dbReference type="ChEBI" id="CHEBI:30616"/>
        <dbReference type="ChEBI" id="CHEBI:61548"/>
        <dbReference type="ChEBI" id="CHEBI:456216"/>
        <dbReference type="EC" id="2.7.1.2"/>
    </reaction>
</comment>
<comment type="subcellular location">
    <subcellularLocation>
        <location evidence="1">Cytoplasm</location>
    </subcellularLocation>
</comment>
<comment type="similarity">
    <text evidence="1">Belongs to the bacterial glucokinase family.</text>
</comment>
<reference key="1">
    <citation type="journal article" date="2005" name="Nucleic Acids Res.">
        <title>Genome dynamics and diversity of Shigella species, the etiologic agents of bacillary dysentery.</title>
        <authorList>
            <person name="Yang F."/>
            <person name="Yang J."/>
            <person name="Zhang X."/>
            <person name="Chen L."/>
            <person name="Jiang Y."/>
            <person name="Yan Y."/>
            <person name="Tang X."/>
            <person name="Wang J."/>
            <person name="Xiong Z."/>
            <person name="Dong J."/>
            <person name="Xue Y."/>
            <person name="Zhu Y."/>
            <person name="Xu X."/>
            <person name="Sun L."/>
            <person name="Chen S."/>
            <person name="Nie H."/>
            <person name="Peng J."/>
            <person name="Xu J."/>
            <person name="Wang Y."/>
            <person name="Yuan Z."/>
            <person name="Wen Y."/>
            <person name="Yao Z."/>
            <person name="Shen Y."/>
            <person name="Qiang B."/>
            <person name="Hou Y."/>
            <person name="Yu J."/>
            <person name="Jin Q."/>
        </authorList>
    </citation>
    <scope>NUCLEOTIDE SEQUENCE [LARGE SCALE GENOMIC DNA]</scope>
    <source>
        <strain>Ss046</strain>
    </source>
</reference>
<protein>
    <recommendedName>
        <fullName evidence="1">Glucokinase</fullName>
        <ecNumber evidence="1">2.7.1.2</ecNumber>
    </recommendedName>
    <alternativeName>
        <fullName evidence="1">Glucose kinase</fullName>
    </alternativeName>
</protein>
<gene>
    <name evidence="1" type="primary">glk</name>
    <name type="ordered locus">SSON_2480</name>
</gene>
<sequence length="321" mass="34726">MTKYALVGDVGGTNARLALCDIASGEISQAKTYSGLDYPSLEAVIRVYLEEHKVEVKDGCIAIACPITGDWVAMTNHTWAFSIAEMKKNLGFSHLEIINDFTAVSMAIPMLKKEHLIQFGGAEPVEGKPIAVYGAGTGLGVAHLVHVDKRWVSLPGEGGHVDFAPNSEEEAIILEILRAEIGHVSAERVLSGPGLVNLYRAIVKADNRLPENLKPKDITERALADSCTDCRRALSLFCVIMGRFGGNLALTLGTFGGVYIAGGIVPRFLEFFKASGFRAAFEDKGRFKEYVHDIPVYLIVHDNPGLLGSGAHLRQTLGHIL</sequence>
<feature type="chain" id="PRO_0000268789" description="Glucokinase">
    <location>
        <begin position="1"/>
        <end position="321"/>
    </location>
</feature>
<feature type="binding site" evidence="1">
    <location>
        <begin position="8"/>
        <end position="13"/>
    </location>
    <ligand>
        <name>ATP</name>
        <dbReference type="ChEBI" id="CHEBI:30616"/>
    </ligand>
</feature>
<proteinExistence type="inferred from homology"/>
<organism>
    <name type="scientific">Shigella sonnei (strain Ss046)</name>
    <dbReference type="NCBI Taxonomy" id="300269"/>
    <lineage>
        <taxon>Bacteria</taxon>
        <taxon>Pseudomonadati</taxon>
        <taxon>Pseudomonadota</taxon>
        <taxon>Gammaproteobacteria</taxon>
        <taxon>Enterobacterales</taxon>
        <taxon>Enterobacteriaceae</taxon>
        <taxon>Shigella</taxon>
    </lineage>
</organism>